<feature type="chain" id="PRO_1000148317" description="Met repressor">
    <location>
        <begin position="1"/>
        <end position="106"/>
    </location>
</feature>
<proteinExistence type="inferred from homology"/>
<accession>B7VLM0</accession>
<gene>
    <name evidence="1" type="primary">metJ</name>
    <name type="ordered locus">VS_2895</name>
</gene>
<dbReference type="EMBL" id="FM954972">
    <property type="protein sequence ID" value="CAV20192.1"/>
    <property type="molecule type" value="Genomic_DNA"/>
</dbReference>
<dbReference type="SMR" id="B7VLM0"/>
<dbReference type="STRING" id="575788.VS_2895"/>
<dbReference type="KEGG" id="vsp:VS_2895"/>
<dbReference type="eggNOG" id="COG3060">
    <property type="taxonomic scope" value="Bacteria"/>
</dbReference>
<dbReference type="HOGENOM" id="CLU_142318_0_0_6"/>
<dbReference type="Proteomes" id="UP000009100">
    <property type="component" value="Chromosome 1"/>
</dbReference>
<dbReference type="GO" id="GO:0005737">
    <property type="term" value="C:cytoplasm"/>
    <property type="evidence" value="ECO:0007669"/>
    <property type="project" value="UniProtKB-SubCell"/>
</dbReference>
<dbReference type="GO" id="GO:0003677">
    <property type="term" value="F:DNA binding"/>
    <property type="evidence" value="ECO:0007669"/>
    <property type="project" value="UniProtKB-KW"/>
</dbReference>
<dbReference type="GO" id="GO:0003700">
    <property type="term" value="F:DNA-binding transcription factor activity"/>
    <property type="evidence" value="ECO:0007669"/>
    <property type="project" value="InterPro"/>
</dbReference>
<dbReference type="GO" id="GO:0009086">
    <property type="term" value="P:methionine biosynthetic process"/>
    <property type="evidence" value="ECO:0007669"/>
    <property type="project" value="UniProtKB-UniRule"/>
</dbReference>
<dbReference type="GO" id="GO:0045892">
    <property type="term" value="P:negative regulation of DNA-templated transcription"/>
    <property type="evidence" value="ECO:0007669"/>
    <property type="project" value="UniProtKB-UniRule"/>
</dbReference>
<dbReference type="CDD" id="cd00490">
    <property type="entry name" value="Met_repressor_MetJ"/>
    <property type="match status" value="1"/>
</dbReference>
<dbReference type="FunFam" id="1.10.140.10:FF:000001">
    <property type="entry name" value="Met repressor"/>
    <property type="match status" value="1"/>
</dbReference>
<dbReference type="Gene3D" id="1.10.140.10">
    <property type="entry name" value="MET Apo-Repressor, subunit A"/>
    <property type="match status" value="1"/>
</dbReference>
<dbReference type="HAMAP" id="MF_00744">
    <property type="entry name" value="MetJ"/>
    <property type="match status" value="1"/>
</dbReference>
<dbReference type="InterPro" id="IPR002084">
    <property type="entry name" value="Met_repressor_MetJ"/>
</dbReference>
<dbReference type="InterPro" id="IPR023453">
    <property type="entry name" value="Met_repressor_MetJ_dom_sf"/>
</dbReference>
<dbReference type="InterPro" id="IPR010985">
    <property type="entry name" value="Ribbon_hlx_hlx"/>
</dbReference>
<dbReference type="NCBIfam" id="NF003622">
    <property type="entry name" value="PRK05264.1"/>
    <property type="match status" value="1"/>
</dbReference>
<dbReference type="Pfam" id="PF01340">
    <property type="entry name" value="MetJ"/>
    <property type="match status" value="1"/>
</dbReference>
<dbReference type="SUPFAM" id="SSF47598">
    <property type="entry name" value="Ribbon-helix-helix"/>
    <property type="match status" value="1"/>
</dbReference>
<organism>
    <name type="scientific">Vibrio atlanticus (strain LGP32)</name>
    <name type="common">Vibrio splendidus (strain Mel32)</name>
    <dbReference type="NCBI Taxonomy" id="575788"/>
    <lineage>
        <taxon>Bacteria</taxon>
        <taxon>Pseudomonadati</taxon>
        <taxon>Pseudomonadota</taxon>
        <taxon>Gammaproteobacteria</taxon>
        <taxon>Vibrionales</taxon>
        <taxon>Vibrionaceae</taxon>
        <taxon>Vibrio</taxon>
    </lineage>
</organism>
<reference key="1">
    <citation type="submission" date="2009-02" db="EMBL/GenBank/DDBJ databases">
        <title>Vibrio splendidus str. LGP32 complete genome.</title>
        <authorList>
            <person name="Mazel D."/>
            <person name="Le Roux F."/>
        </authorList>
    </citation>
    <scope>NUCLEOTIDE SEQUENCE [LARGE SCALE GENOMIC DNA]</scope>
    <source>
        <strain>LGP32</strain>
    </source>
</reference>
<sequence length="106" mass="12275">MADWNGEYISPYAEHGKKSEQVKKITVSIPLKVLKVLTDERTRRQINNLRHATNSELLCEAFLHAYTGQPLPTDEDLRKDRPDDIPTEVKKLMTEMGIEFEAFDEE</sequence>
<evidence type="ECO:0000255" key="1">
    <source>
        <dbReference type="HAMAP-Rule" id="MF_00744"/>
    </source>
</evidence>
<keyword id="KW-0028">Amino-acid biosynthesis</keyword>
<keyword id="KW-0963">Cytoplasm</keyword>
<keyword id="KW-0238">DNA-binding</keyword>
<keyword id="KW-0486">Methionine biosynthesis</keyword>
<keyword id="KW-0678">Repressor</keyword>
<keyword id="KW-0804">Transcription</keyword>
<keyword id="KW-0805">Transcription regulation</keyword>
<protein>
    <recommendedName>
        <fullName evidence="1">Met repressor</fullName>
    </recommendedName>
    <alternativeName>
        <fullName evidence="1">Met regulon regulatory protein MetJ</fullName>
    </alternativeName>
</protein>
<comment type="function">
    <text evidence="1">This regulatory protein, when combined with SAM (S-adenosylmethionine) represses the expression of the methionine regulon and of enzymes involved in SAM synthesis.</text>
</comment>
<comment type="subunit">
    <text evidence="1">Homodimer.</text>
</comment>
<comment type="subcellular location">
    <subcellularLocation>
        <location evidence="1">Cytoplasm</location>
    </subcellularLocation>
</comment>
<comment type="domain">
    <text>Does not bind DNA by a helix-turn-helix motif.</text>
</comment>
<comment type="similarity">
    <text evidence="1">Belongs to the MetJ family.</text>
</comment>
<name>METJ_VIBA3</name>